<dbReference type="EC" id="1.1.-.-" evidence="8"/>
<dbReference type="EMBL" id="MH375768">
    <property type="protein sequence ID" value="QBC88149.1"/>
    <property type="molecule type" value="Genomic_DNA"/>
</dbReference>
<dbReference type="SMR" id="A0A411KUU9"/>
<dbReference type="GlyCosmos" id="A0A411KUU9">
    <property type="glycosylation" value="1 site, No reported glycans"/>
</dbReference>
<dbReference type="GO" id="GO:0016020">
    <property type="term" value="C:membrane"/>
    <property type="evidence" value="ECO:0007669"/>
    <property type="project" value="UniProtKB-SubCell"/>
</dbReference>
<dbReference type="GO" id="GO:0016491">
    <property type="term" value="F:oxidoreductase activity"/>
    <property type="evidence" value="ECO:0007669"/>
    <property type="project" value="UniProtKB-KW"/>
</dbReference>
<dbReference type="CDD" id="cd05233">
    <property type="entry name" value="SDR_c"/>
    <property type="match status" value="1"/>
</dbReference>
<dbReference type="Gene3D" id="3.40.50.720">
    <property type="entry name" value="NAD(P)-binding Rossmann-like Domain"/>
    <property type="match status" value="1"/>
</dbReference>
<dbReference type="InterPro" id="IPR036291">
    <property type="entry name" value="NAD(P)-bd_dom_sf"/>
</dbReference>
<dbReference type="InterPro" id="IPR002347">
    <property type="entry name" value="SDR_fam"/>
</dbReference>
<dbReference type="InterPro" id="IPR051122">
    <property type="entry name" value="SDR_superfamily_enzyme"/>
</dbReference>
<dbReference type="PANTHER" id="PTHR43477">
    <property type="entry name" value="DIHYDROANTICAPSIN 7-DEHYDROGENASE"/>
    <property type="match status" value="1"/>
</dbReference>
<dbReference type="PANTHER" id="PTHR43477:SF1">
    <property type="entry name" value="DIHYDROANTICAPSIN 7-DEHYDROGENASE"/>
    <property type="match status" value="1"/>
</dbReference>
<dbReference type="Pfam" id="PF23441">
    <property type="entry name" value="SDR"/>
    <property type="match status" value="1"/>
</dbReference>
<dbReference type="PRINTS" id="PR00081">
    <property type="entry name" value="GDHRDH"/>
</dbReference>
<dbReference type="SUPFAM" id="SSF51735">
    <property type="entry name" value="NAD(P)-binding Rossmann-fold domains"/>
    <property type="match status" value="1"/>
</dbReference>
<organism>
    <name type="scientific">Acremonium sp</name>
    <dbReference type="NCBI Taxonomy" id="2046025"/>
    <lineage>
        <taxon>Eukaryota</taxon>
        <taxon>Fungi</taxon>
        <taxon>Dikarya</taxon>
        <taxon>Ascomycota</taxon>
        <taxon>Pezizomycotina</taxon>
        <taxon>Sordariomycetes</taxon>
        <taxon>Hypocreomycetidae</taxon>
        <taxon>Hypocreales</taxon>
        <taxon>Hypocreales incertae sedis</taxon>
        <taxon>Acremonium</taxon>
    </lineage>
</organism>
<protein>
    <recommendedName>
        <fullName evidence="6">Short-chain dehydrogenase/reductase ucsE</fullName>
        <ecNumber evidence="8">1.1.-.-</ecNumber>
    </recommendedName>
    <alternativeName>
        <fullName evidence="6">UCS1025A pyrrolizidinone biosynthesis cluster protein E</fullName>
    </alternativeName>
</protein>
<sequence>MATRTADKLEKKLVVVVGGTSGLGFAVAQAAVDRKANVVVASSKQASVDDALSRLQAGLASDDDVARVRGLTLDLAAANVEEQIVALYDFASKNGQQKIDHIAVTAGDSLYPKALDQVKAEDFINASQVRVIGALLLAKHAAKYLAKSAASSFTLTSGVRDVRPAANFAPVAPVSAAVKSLAKTLAHDLAPIRVNSISPGAVRTEFFTKIAGEHADAVLQGLAEQTLTKSNGVAEDIAEIYLVVMTSAYIDGADLVADGGSLIA</sequence>
<evidence type="ECO:0000250" key="1">
    <source>
        <dbReference type="UniProtKB" id="L0E2Z4"/>
    </source>
</evidence>
<evidence type="ECO:0000250" key="2">
    <source>
        <dbReference type="UniProtKB" id="O93868"/>
    </source>
</evidence>
<evidence type="ECO:0000255" key="3"/>
<evidence type="ECO:0000255" key="4">
    <source>
        <dbReference type="PROSITE-ProRule" id="PRU00498"/>
    </source>
</evidence>
<evidence type="ECO:0000269" key="5">
    <source>
    </source>
</evidence>
<evidence type="ECO:0000303" key="6">
    <source>
    </source>
</evidence>
<evidence type="ECO:0000305" key="7"/>
<evidence type="ECO:0000305" key="8">
    <source>
    </source>
</evidence>
<reference key="1">
    <citation type="journal article" date="2018" name="J. Am. Chem. Soc.">
        <title>Genome mining and assembly-line biosynthesis of the UCS1025A pyrrolizidinone family of fungal alkaloids.</title>
        <authorList>
            <person name="Li L."/>
            <person name="Tang M.C."/>
            <person name="Tang S."/>
            <person name="Gao S."/>
            <person name="Soliman S."/>
            <person name="Hang L."/>
            <person name="Xu W."/>
            <person name="Ye T."/>
            <person name="Watanabe K."/>
            <person name="Tang Y."/>
        </authorList>
    </citation>
    <scope>NUCLEOTIDE SEQUENCE [GENOMIC DNA]</scope>
    <scope>FUNCTION</scope>
    <scope>PATHWAY</scope>
    <source>
        <strain>KY4917</strain>
    </source>
</reference>
<accession>A0A411KUU9</accession>
<feature type="chain" id="PRO_0000450535" description="Short-chain dehydrogenase/reductase ucsE">
    <location>
        <begin position="1"/>
        <end position="264"/>
    </location>
</feature>
<feature type="transmembrane region" description="Helical" evidence="3">
    <location>
        <begin position="13"/>
        <end position="32"/>
    </location>
</feature>
<feature type="active site" description="Proton donor" evidence="2">
    <location>
        <position position="157"/>
    </location>
</feature>
<feature type="binding site" evidence="1">
    <location>
        <position position="23"/>
    </location>
    <ligand>
        <name>NADP(+)</name>
        <dbReference type="ChEBI" id="CHEBI:58349"/>
    </ligand>
</feature>
<feature type="binding site" evidence="1">
    <location>
        <position position="43"/>
    </location>
    <ligand>
        <name>NADP(+)</name>
        <dbReference type="ChEBI" id="CHEBI:58349"/>
    </ligand>
</feature>
<feature type="binding site" evidence="1">
    <location>
        <position position="74"/>
    </location>
    <ligand>
        <name>NADP(+)</name>
        <dbReference type="ChEBI" id="CHEBI:58349"/>
    </ligand>
</feature>
<feature type="binding site" evidence="1">
    <location>
        <position position="130"/>
    </location>
    <ligand>
        <name>NADP(+)</name>
        <dbReference type="ChEBI" id="CHEBI:58349"/>
    </ligand>
</feature>
<feature type="binding site" evidence="1">
    <location>
        <position position="139"/>
    </location>
    <ligand>
        <name>NADP(+)</name>
        <dbReference type="ChEBI" id="CHEBI:58349"/>
    </ligand>
</feature>
<feature type="binding site" evidence="2">
    <location>
        <position position="202"/>
    </location>
    <ligand>
        <name>NADP(+)</name>
        <dbReference type="ChEBI" id="CHEBI:58349"/>
    </ligand>
</feature>
<feature type="binding site" evidence="1">
    <location>
        <position position="204"/>
    </location>
    <ligand>
        <name>NADP(+)</name>
        <dbReference type="ChEBI" id="CHEBI:58349"/>
    </ligand>
</feature>
<feature type="glycosylation site" description="N-linked (GlcNAc...) asparagine" evidence="4">
    <location>
        <position position="125"/>
    </location>
</feature>
<gene>
    <name evidence="6" type="primary">ucsE</name>
</gene>
<keyword id="KW-0325">Glycoprotein</keyword>
<keyword id="KW-0472">Membrane</keyword>
<keyword id="KW-0521">NADP</keyword>
<keyword id="KW-0560">Oxidoreductase</keyword>
<keyword id="KW-0812">Transmembrane</keyword>
<keyword id="KW-1133">Transmembrane helix</keyword>
<comment type="function">
    <text evidence="5 8">Short-chain dehydrogenase/reductase; part of the gene cluster that mediates the biosynthesis of UCS1025A, a member of the pyrrolizidinone family that acts as a strong telomerase inhibitor and displays potent antibacterial and antitumor properties (PubMed:29373009). These compounds share a hemiaminal-containing pyrrolizidinone core fused with a gamma-lactone, giving a furopyrrolizidine that is connected to a decalin fragment (PubMed:29373009). The polyketide synthase module (PKS) of the PKS-NRPS ucsA is responsible for the synthesis of the polyketide backbone via the condensation of an acetyl-CoA starter unit with 6 malonyl-CoA units (PubMed:29373009). The downstream nonribosomal peptide synthetase (NRPS) module then amidates the carboxyl end of the polyketide with a 2S,3S-methylproline derived from L-isoleucine by the 2-oxoglutarate-dependent dioxygenase ucsF which converts L-isoleucine to (4S,5S)-4-methylpyrroline-5-carboxylate that is further converted to 2S,3S-methylproline by the pyrroline-5-carboxylate reductase ucsG (PubMed:29373009). Reductive release of the completed aminoacyl polyketide from the assembly line can form the 3-pyrrolin-2-one structure via an intramolecular Knoevenagel reaction (PubMed:29373009). Because ucsA lacks a designated enoylreductase (ER) domain, the required activity is provided the enoyl reductase ucsL (PubMed:29373009). This keto acyclic precursor is the substrate of the Diels-Alderase ucsH, that catalyzes the Diels-Alder cycloaddition (PubMed:29373009). Oxidation of the 3S-methyl group to a carboxylate by the cytochrome P450 monooxygenase ucsK allows an oxa-Michael cyclization that might involve the reductase/dehydrogenase ucsI and which furnishes the furopyrrolizidine (PubMed:29373009). The oxidase ucsJ likely plays a critical role in stereoselective reduction of the C5-C6 double bond to afford the required R-configured carboxylate group (Probable). Further enolization and oxidation at C5 by an unidentified enzyme affords the last intermediate that can undergo oxa-Michael cyclization to yield UCS1025A (Probable).</text>
</comment>
<comment type="cofactor">
    <cofactor evidence="7">
        <name>NADP(+)</name>
        <dbReference type="ChEBI" id="CHEBI:58349"/>
    </cofactor>
</comment>
<comment type="pathway">
    <text evidence="8">Mycotoxin biosynthesis.</text>
</comment>
<comment type="subcellular location">
    <subcellularLocation>
        <location evidence="3">Membrane</location>
        <topology evidence="3">Single-pass membrane protein</topology>
    </subcellularLocation>
</comment>
<comment type="similarity">
    <text evidence="7">Belongs to the short-chain dehydrogenases/reductases (SDR) family.</text>
</comment>
<proteinExistence type="inferred from homology"/>
<name>UCSE_ACRSP</name>